<organism>
    <name type="scientific">Escherichia fergusonii (strain ATCC 35469 / DSM 13698 / CCUG 18766 / IAM 14443 / JCM 21226 / LMG 7866 / NBRC 102419 / NCTC 12128 / CDC 0568-73)</name>
    <dbReference type="NCBI Taxonomy" id="585054"/>
    <lineage>
        <taxon>Bacteria</taxon>
        <taxon>Pseudomonadati</taxon>
        <taxon>Pseudomonadota</taxon>
        <taxon>Gammaproteobacteria</taxon>
        <taxon>Enterobacterales</taxon>
        <taxon>Enterobacteriaceae</taxon>
        <taxon>Escherichia</taxon>
    </lineage>
</organism>
<proteinExistence type="inferred from homology"/>
<feature type="chain" id="PRO_1000118151" description="Pantothenate synthetase">
    <location>
        <begin position="1"/>
        <end position="283"/>
    </location>
</feature>
<feature type="active site" description="Proton donor" evidence="1">
    <location>
        <position position="37"/>
    </location>
</feature>
<feature type="binding site" evidence="1">
    <location>
        <begin position="30"/>
        <end position="37"/>
    </location>
    <ligand>
        <name>ATP</name>
        <dbReference type="ChEBI" id="CHEBI:30616"/>
    </ligand>
</feature>
<feature type="binding site" evidence="1">
    <location>
        <position position="61"/>
    </location>
    <ligand>
        <name>(R)-pantoate</name>
        <dbReference type="ChEBI" id="CHEBI:15980"/>
    </ligand>
</feature>
<feature type="binding site" evidence="1">
    <location>
        <position position="61"/>
    </location>
    <ligand>
        <name>beta-alanine</name>
        <dbReference type="ChEBI" id="CHEBI:57966"/>
    </ligand>
</feature>
<feature type="binding site" evidence="1">
    <location>
        <begin position="149"/>
        <end position="152"/>
    </location>
    <ligand>
        <name>ATP</name>
        <dbReference type="ChEBI" id="CHEBI:30616"/>
    </ligand>
</feature>
<feature type="binding site" evidence="1">
    <location>
        <position position="155"/>
    </location>
    <ligand>
        <name>(R)-pantoate</name>
        <dbReference type="ChEBI" id="CHEBI:15980"/>
    </ligand>
</feature>
<feature type="binding site" evidence="1">
    <location>
        <begin position="186"/>
        <end position="189"/>
    </location>
    <ligand>
        <name>ATP</name>
        <dbReference type="ChEBI" id="CHEBI:30616"/>
    </ligand>
</feature>
<evidence type="ECO:0000255" key="1">
    <source>
        <dbReference type="HAMAP-Rule" id="MF_00158"/>
    </source>
</evidence>
<accession>B7LW40</accession>
<name>PANC_ESCF3</name>
<keyword id="KW-0067">ATP-binding</keyword>
<keyword id="KW-0963">Cytoplasm</keyword>
<keyword id="KW-0436">Ligase</keyword>
<keyword id="KW-0547">Nucleotide-binding</keyword>
<keyword id="KW-0566">Pantothenate biosynthesis</keyword>
<comment type="function">
    <text evidence="1">Catalyzes the condensation of pantoate with beta-alanine in an ATP-dependent reaction via a pantoyl-adenylate intermediate.</text>
</comment>
<comment type="catalytic activity">
    <reaction evidence="1">
        <text>(R)-pantoate + beta-alanine + ATP = (R)-pantothenate + AMP + diphosphate + H(+)</text>
        <dbReference type="Rhea" id="RHEA:10912"/>
        <dbReference type="ChEBI" id="CHEBI:15378"/>
        <dbReference type="ChEBI" id="CHEBI:15980"/>
        <dbReference type="ChEBI" id="CHEBI:29032"/>
        <dbReference type="ChEBI" id="CHEBI:30616"/>
        <dbReference type="ChEBI" id="CHEBI:33019"/>
        <dbReference type="ChEBI" id="CHEBI:57966"/>
        <dbReference type="ChEBI" id="CHEBI:456215"/>
        <dbReference type="EC" id="6.3.2.1"/>
    </reaction>
</comment>
<comment type="pathway">
    <text evidence="1">Cofactor biosynthesis; (R)-pantothenate biosynthesis; (R)-pantothenate from (R)-pantoate and beta-alanine: step 1/1.</text>
</comment>
<comment type="subunit">
    <text evidence="1">Homodimer.</text>
</comment>
<comment type="subcellular location">
    <subcellularLocation>
        <location evidence="1">Cytoplasm</location>
    </subcellularLocation>
</comment>
<comment type="miscellaneous">
    <text evidence="1">The reaction proceeds by a bi uni uni bi ping pong mechanism.</text>
</comment>
<comment type="similarity">
    <text evidence="1">Belongs to the pantothenate synthetase family.</text>
</comment>
<reference key="1">
    <citation type="journal article" date="2009" name="PLoS Genet.">
        <title>Organised genome dynamics in the Escherichia coli species results in highly diverse adaptive paths.</title>
        <authorList>
            <person name="Touchon M."/>
            <person name="Hoede C."/>
            <person name="Tenaillon O."/>
            <person name="Barbe V."/>
            <person name="Baeriswyl S."/>
            <person name="Bidet P."/>
            <person name="Bingen E."/>
            <person name="Bonacorsi S."/>
            <person name="Bouchier C."/>
            <person name="Bouvet O."/>
            <person name="Calteau A."/>
            <person name="Chiapello H."/>
            <person name="Clermont O."/>
            <person name="Cruveiller S."/>
            <person name="Danchin A."/>
            <person name="Diard M."/>
            <person name="Dossat C."/>
            <person name="Karoui M.E."/>
            <person name="Frapy E."/>
            <person name="Garry L."/>
            <person name="Ghigo J.M."/>
            <person name="Gilles A.M."/>
            <person name="Johnson J."/>
            <person name="Le Bouguenec C."/>
            <person name="Lescat M."/>
            <person name="Mangenot S."/>
            <person name="Martinez-Jehanne V."/>
            <person name="Matic I."/>
            <person name="Nassif X."/>
            <person name="Oztas S."/>
            <person name="Petit M.A."/>
            <person name="Pichon C."/>
            <person name="Rouy Z."/>
            <person name="Ruf C.S."/>
            <person name="Schneider D."/>
            <person name="Tourret J."/>
            <person name="Vacherie B."/>
            <person name="Vallenet D."/>
            <person name="Medigue C."/>
            <person name="Rocha E.P.C."/>
            <person name="Denamur E."/>
        </authorList>
    </citation>
    <scope>NUCLEOTIDE SEQUENCE [LARGE SCALE GENOMIC DNA]</scope>
    <source>
        <strain>ATCC 35469 / DSM 13698 / BCRC 15582 / CCUG 18766 / IAM 14443 / JCM 21226 / LMG 7866 / NBRC 102419 / NCTC 12128 / CDC 0568-73</strain>
    </source>
</reference>
<gene>
    <name evidence="1" type="primary">panC</name>
    <name type="ordered locus">EFER_0155</name>
</gene>
<protein>
    <recommendedName>
        <fullName evidence="1">Pantothenate synthetase</fullName>
        <shortName evidence="1">PS</shortName>
        <ecNumber evidence="1">6.3.2.1</ecNumber>
    </recommendedName>
    <alternativeName>
        <fullName evidence="1">Pantoate--beta-alanine ligase</fullName>
    </alternativeName>
    <alternativeName>
        <fullName evidence="1">Pantoate-activating enzyme</fullName>
    </alternativeName>
</protein>
<sequence>MLIIETLPLLRQQIRRLRMEGKRVALVPTMGNLHDGHMKLVDEAKARADVVVVSIFVNPMQFDRPEDLARYPRTLQEDCEKLNKRKVDLVFAPSVKEIYPNGTETHTYVDVPGLSTMLEGASRPGHFRGVSTIVSKLFNLVQPDIACFGEKDFQQLALIRKMVADMGFDIEIVGVPIMRAKDGLALSSRNGYLTAEQRKIAPGLYKVLSSIADKLQAGERDLDEIIAIAGQELNEKGFRSDDIQIRDADTLLEISENSKRAVILVAAWLGDARLIDNKMVELA</sequence>
<dbReference type="EC" id="6.3.2.1" evidence="1"/>
<dbReference type="EMBL" id="CU928158">
    <property type="protein sequence ID" value="CAQ87737.1"/>
    <property type="molecule type" value="Genomic_DNA"/>
</dbReference>
<dbReference type="RefSeq" id="WP_000905379.1">
    <property type="nucleotide sequence ID" value="NC_011740.1"/>
</dbReference>
<dbReference type="SMR" id="B7LW40"/>
<dbReference type="GeneID" id="75058760"/>
<dbReference type="KEGG" id="efe:EFER_0155"/>
<dbReference type="HOGENOM" id="CLU_047148_0_0_6"/>
<dbReference type="OrthoDB" id="9773087at2"/>
<dbReference type="UniPathway" id="UPA00028">
    <property type="reaction ID" value="UER00005"/>
</dbReference>
<dbReference type="Proteomes" id="UP000000745">
    <property type="component" value="Chromosome"/>
</dbReference>
<dbReference type="GO" id="GO:0005829">
    <property type="term" value="C:cytosol"/>
    <property type="evidence" value="ECO:0007669"/>
    <property type="project" value="TreeGrafter"/>
</dbReference>
<dbReference type="GO" id="GO:0005524">
    <property type="term" value="F:ATP binding"/>
    <property type="evidence" value="ECO:0007669"/>
    <property type="project" value="UniProtKB-KW"/>
</dbReference>
<dbReference type="GO" id="GO:0004592">
    <property type="term" value="F:pantoate-beta-alanine ligase activity"/>
    <property type="evidence" value="ECO:0007669"/>
    <property type="project" value="UniProtKB-UniRule"/>
</dbReference>
<dbReference type="GO" id="GO:0015940">
    <property type="term" value="P:pantothenate biosynthetic process"/>
    <property type="evidence" value="ECO:0007669"/>
    <property type="project" value="UniProtKB-UniRule"/>
</dbReference>
<dbReference type="CDD" id="cd00560">
    <property type="entry name" value="PanC"/>
    <property type="match status" value="1"/>
</dbReference>
<dbReference type="FunFam" id="3.30.1300.10:FF:000001">
    <property type="entry name" value="Pantothenate synthetase"/>
    <property type="match status" value="1"/>
</dbReference>
<dbReference type="FunFam" id="3.40.50.620:FF:000013">
    <property type="entry name" value="Pantothenate synthetase"/>
    <property type="match status" value="1"/>
</dbReference>
<dbReference type="Gene3D" id="3.40.50.620">
    <property type="entry name" value="HUPs"/>
    <property type="match status" value="1"/>
</dbReference>
<dbReference type="Gene3D" id="3.30.1300.10">
    <property type="entry name" value="Pantoate-beta-alanine ligase, C-terminal domain"/>
    <property type="match status" value="1"/>
</dbReference>
<dbReference type="HAMAP" id="MF_00158">
    <property type="entry name" value="PanC"/>
    <property type="match status" value="1"/>
</dbReference>
<dbReference type="InterPro" id="IPR004821">
    <property type="entry name" value="Cyt_trans-like"/>
</dbReference>
<dbReference type="InterPro" id="IPR003721">
    <property type="entry name" value="Pantoate_ligase"/>
</dbReference>
<dbReference type="InterPro" id="IPR042176">
    <property type="entry name" value="Pantoate_ligase_C"/>
</dbReference>
<dbReference type="InterPro" id="IPR014729">
    <property type="entry name" value="Rossmann-like_a/b/a_fold"/>
</dbReference>
<dbReference type="NCBIfam" id="TIGR00125">
    <property type="entry name" value="cyt_tran_rel"/>
    <property type="match status" value="1"/>
</dbReference>
<dbReference type="NCBIfam" id="TIGR00018">
    <property type="entry name" value="panC"/>
    <property type="match status" value="1"/>
</dbReference>
<dbReference type="PANTHER" id="PTHR21299">
    <property type="entry name" value="CYTIDYLATE KINASE/PANTOATE-BETA-ALANINE LIGASE"/>
    <property type="match status" value="1"/>
</dbReference>
<dbReference type="PANTHER" id="PTHR21299:SF1">
    <property type="entry name" value="PANTOATE--BETA-ALANINE LIGASE"/>
    <property type="match status" value="1"/>
</dbReference>
<dbReference type="Pfam" id="PF02569">
    <property type="entry name" value="Pantoate_ligase"/>
    <property type="match status" value="1"/>
</dbReference>
<dbReference type="SUPFAM" id="SSF52374">
    <property type="entry name" value="Nucleotidylyl transferase"/>
    <property type="match status" value="1"/>
</dbReference>